<feature type="chain" id="PRO_0000282993" description="CUE domain-containing protein 2">
    <location>
        <begin position="1"/>
        <end position="284"/>
    </location>
</feature>
<feature type="domain" description="CUE" evidence="2">
    <location>
        <begin position="141"/>
        <end position="184"/>
    </location>
</feature>
<feature type="region of interest" description="Disordered" evidence="3">
    <location>
        <begin position="183"/>
        <end position="204"/>
    </location>
</feature>
<feature type="sequence conflict" description="In Ref. 3; AAH03442." evidence="4" ref="3">
    <original>T</original>
    <variation>A</variation>
    <location>
        <position position="13"/>
    </location>
</feature>
<feature type="sequence conflict" description="In Ref. 3; AAH03442." evidence="4" ref="3">
    <original>G</original>
    <variation>R</variation>
    <location>
        <position position="186"/>
    </location>
</feature>
<organism>
    <name type="scientific">Mus musculus</name>
    <name type="common">Mouse</name>
    <dbReference type="NCBI Taxonomy" id="10090"/>
    <lineage>
        <taxon>Eukaryota</taxon>
        <taxon>Metazoa</taxon>
        <taxon>Chordata</taxon>
        <taxon>Craniata</taxon>
        <taxon>Vertebrata</taxon>
        <taxon>Euteleostomi</taxon>
        <taxon>Mammalia</taxon>
        <taxon>Eutheria</taxon>
        <taxon>Euarchontoglires</taxon>
        <taxon>Glires</taxon>
        <taxon>Rodentia</taxon>
        <taxon>Myomorpha</taxon>
        <taxon>Muroidea</taxon>
        <taxon>Muridae</taxon>
        <taxon>Murinae</taxon>
        <taxon>Mus</taxon>
        <taxon>Mus</taxon>
    </lineage>
</organism>
<dbReference type="EMBL" id="AB232359">
    <property type="protein sequence ID" value="BAE19943.1"/>
    <property type="molecule type" value="mRNA"/>
</dbReference>
<dbReference type="EMBL" id="AK013884">
    <property type="protein sequence ID" value="BAB29035.1"/>
    <property type="molecule type" value="mRNA"/>
</dbReference>
<dbReference type="EMBL" id="BC003442">
    <property type="protein sequence ID" value="AAH03442.1"/>
    <property type="molecule type" value="mRNA"/>
</dbReference>
<dbReference type="CCDS" id="CCDS29876.1"/>
<dbReference type="RefSeq" id="NP_001157762.1">
    <property type="nucleotide sequence ID" value="NM_001164290.1"/>
</dbReference>
<dbReference type="RefSeq" id="NP_001157763.1">
    <property type="nucleotide sequence ID" value="NM_001164291.1"/>
</dbReference>
<dbReference type="RefSeq" id="NP_001157764.1">
    <property type="nucleotide sequence ID" value="NM_001164292.1"/>
</dbReference>
<dbReference type="RefSeq" id="NP_001157765.1">
    <property type="nucleotide sequence ID" value="NM_001164293.1"/>
</dbReference>
<dbReference type="RefSeq" id="NP_001157766.1">
    <property type="nucleotide sequence ID" value="NM_001164294.1"/>
</dbReference>
<dbReference type="RefSeq" id="NP_001157767.1">
    <property type="nucleotide sequence ID" value="NM_001164295.1"/>
</dbReference>
<dbReference type="RefSeq" id="NP_077154.2">
    <property type="nucleotide sequence ID" value="NM_024192.2"/>
</dbReference>
<dbReference type="RefSeq" id="XP_006527338.1">
    <property type="nucleotide sequence ID" value="XM_006527275.5"/>
</dbReference>
<dbReference type="RefSeq" id="XP_006527339.1">
    <property type="nucleotide sequence ID" value="XM_006527276.4"/>
</dbReference>
<dbReference type="RefSeq" id="XP_006527340.1">
    <property type="nucleotide sequence ID" value="XM_006527277.5"/>
</dbReference>
<dbReference type="RefSeq" id="XP_006527341.1">
    <property type="nucleotide sequence ID" value="XM_006527278.4"/>
</dbReference>
<dbReference type="RefSeq" id="XP_011245619.1">
    <property type="nucleotide sequence ID" value="XM_011247317.3"/>
</dbReference>
<dbReference type="RefSeq" id="XP_011245620.1">
    <property type="nucleotide sequence ID" value="XM_011247318.3"/>
</dbReference>
<dbReference type="RefSeq" id="XP_011245621.1">
    <property type="nucleotide sequence ID" value="XM_011247319.3"/>
</dbReference>
<dbReference type="RefSeq" id="XP_030106893.1">
    <property type="nucleotide sequence ID" value="XM_030251033.2"/>
</dbReference>
<dbReference type="SMR" id="Q9CXX9"/>
<dbReference type="BioGRID" id="211950">
    <property type="interactions" value="4"/>
</dbReference>
<dbReference type="FunCoup" id="Q9CXX9">
    <property type="interactions" value="2809"/>
</dbReference>
<dbReference type="STRING" id="10090.ENSMUSP00000129589"/>
<dbReference type="iPTMnet" id="Q9CXX9"/>
<dbReference type="PhosphoSitePlus" id="Q9CXX9"/>
<dbReference type="PaxDb" id="10090-ENSMUSP00000129589"/>
<dbReference type="PeptideAtlas" id="Q9CXX9"/>
<dbReference type="ProteomicsDB" id="279234"/>
<dbReference type="Pumba" id="Q9CXX9"/>
<dbReference type="Antibodypedia" id="31442">
    <property type="antibodies" value="302 antibodies from 36 providers"/>
</dbReference>
<dbReference type="Ensembl" id="ENSMUST00000051234.9">
    <property type="protein sequence ID" value="ENSMUSP00000053469.9"/>
    <property type="gene ID" value="ENSMUSG00000036748.17"/>
</dbReference>
<dbReference type="Ensembl" id="ENSMUST00000167861.8">
    <property type="protein sequence ID" value="ENSMUSP00000129589.2"/>
    <property type="gene ID" value="ENSMUSG00000036748.17"/>
</dbReference>
<dbReference type="Ensembl" id="ENSMUST00000235485.2">
    <property type="protein sequence ID" value="ENSMUSP00000158425.2"/>
    <property type="gene ID" value="ENSMUSG00000036748.17"/>
</dbReference>
<dbReference type="Ensembl" id="ENSMUST00000236046.2">
    <property type="protein sequence ID" value="ENSMUSP00000157580.2"/>
    <property type="gene ID" value="ENSMUSG00000036748.17"/>
</dbReference>
<dbReference type="Ensembl" id="ENSMUST00000236061.2">
    <property type="protein sequence ID" value="ENSMUSP00000157840.2"/>
    <property type="gene ID" value="ENSMUSG00000036748.17"/>
</dbReference>
<dbReference type="GeneID" id="67116"/>
<dbReference type="KEGG" id="mmu:67116"/>
<dbReference type="UCSC" id="uc008htg.2">
    <property type="organism name" value="mouse"/>
</dbReference>
<dbReference type="AGR" id="MGI:1914366"/>
<dbReference type="CTD" id="79004"/>
<dbReference type="MGI" id="MGI:1914366">
    <property type="gene designation" value="Cuedc2"/>
</dbReference>
<dbReference type="VEuPathDB" id="HostDB:ENSMUSG00000036748"/>
<dbReference type="eggNOG" id="ENOG502RZII">
    <property type="taxonomic scope" value="Eukaryota"/>
</dbReference>
<dbReference type="GeneTree" id="ENSGT00390000014513"/>
<dbReference type="HOGENOM" id="CLU_048031_0_0_1"/>
<dbReference type="InParanoid" id="Q9CXX9"/>
<dbReference type="OMA" id="CLKPQTE"/>
<dbReference type="OrthoDB" id="10060331at2759"/>
<dbReference type="PhylomeDB" id="Q9CXX9"/>
<dbReference type="TreeFam" id="TF324328"/>
<dbReference type="BioGRID-ORCS" id="67116">
    <property type="hits" value="5 hits in 78 CRISPR screens"/>
</dbReference>
<dbReference type="ChiTaRS" id="Cuedc2">
    <property type="organism name" value="mouse"/>
</dbReference>
<dbReference type="PRO" id="PR:Q9CXX9"/>
<dbReference type="Proteomes" id="UP000000589">
    <property type="component" value="Chromosome 19"/>
</dbReference>
<dbReference type="RNAct" id="Q9CXX9">
    <property type="molecule type" value="protein"/>
</dbReference>
<dbReference type="Bgee" id="ENSMUSG00000036748">
    <property type="expression patterns" value="Expressed in embryonic brain and 264 other cell types or tissues"/>
</dbReference>
<dbReference type="ExpressionAtlas" id="Q9CXX9">
    <property type="expression patterns" value="baseline and differential"/>
</dbReference>
<dbReference type="GO" id="GO:0005829">
    <property type="term" value="C:cytosol"/>
    <property type="evidence" value="ECO:0007669"/>
    <property type="project" value="Ensembl"/>
</dbReference>
<dbReference type="GO" id="GO:0031965">
    <property type="term" value="C:nuclear membrane"/>
    <property type="evidence" value="ECO:0007669"/>
    <property type="project" value="Ensembl"/>
</dbReference>
<dbReference type="GO" id="GO:0005654">
    <property type="term" value="C:nucleoplasm"/>
    <property type="evidence" value="ECO:0007669"/>
    <property type="project" value="Ensembl"/>
</dbReference>
<dbReference type="GO" id="GO:0043130">
    <property type="term" value="F:ubiquitin binding"/>
    <property type="evidence" value="ECO:0007669"/>
    <property type="project" value="InterPro"/>
</dbReference>
<dbReference type="GO" id="GO:1900016">
    <property type="term" value="P:negative regulation of cytokine production involved in inflammatory response"/>
    <property type="evidence" value="ECO:0000315"/>
    <property type="project" value="MGI"/>
</dbReference>
<dbReference type="GO" id="GO:0010936">
    <property type="term" value="P:negative regulation of macrophage cytokine production"/>
    <property type="evidence" value="ECO:0000315"/>
    <property type="project" value="MGI"/>
</dbReference>
<dbReference type="CDD" id="cd14367">
    <property type="entry name" value="CUE_CUED2"/>
    <property type="match status" value="1"/>
</dbReference>
<dbReference type="InterPro" id="IPR003892">
    <property type="entry name" value="CUE"/>
</dbReference>
<dbReference type="InterPro" id="IPR039805">
    <property type="entry name" value="CUE_CUED2"/>
</dbReference>
<dbReference type="PANTHER" id="PTHR12493">
    <property type="entry name" value="CUE DOMAIN CONTAINING 2"/>
    <property type="match status" value="1"/>
</dbReference>
<dbReference type="PANTHER" id="PTHR12493:SF0">
    <property type="entry name" value="CUE DOMAIN-CONTAINING PROTEIN 2"/>
    <property type="match status" value="1"/>
</dbReference>
<dbReference type="PROSITE" id="PS51140">
    <property type="entry name" value="CUE"/>
    <property type="match status" value="1"/>
</dbReference>
<sequence>MELERIVGSALLTFVQAHLPEADLSGLDEVIFSYVLGVLEDLGPSGPSEENFDMEAFTEMMEAYVPGFAHIPRGIIGDMMQKLSVQLSDARNKENLHPQSSCVQGQVPIFPETPRQAEKLEEESRPPAAPGNTLDEAAAAEELPGVDVLLEVFPTCSMEQAQWVLAKARGDLEEAVHMLVEGKEEGPPGWDGPSQDLPRRLRGPQKDDLKSFILQKYMMVDRAEDQKTHRPMAPKEAPKKLIRYIDNQVVSTKGERFKDVRNPEAEEMKATYINLKPARKYRFH</sequence>
<comment type="function">
    <text evidence="1">Controls PGR and ESR1 protein levels through their targeting for ubiquitination and subsequent proteasomal degradation.</text>
</comment>
<comment type="subunit">
    <text evidence="1">Interacts with PGR and ESR1.</text>
</comment>
<comment type="subcellular location">
    <subcellularLocation>
        <location evidence="1">Cytoplasm</location>
    </subcellularLocation>
    <subcellularLocation>
        <location evidence="1">Nucleus</location>
    </subcellularLocation>
</comment>
<comment type="domain">
    <text evidence="1">The CUE domain mediates interaction with PGR and ESR1.</text>
</comment>
<comment type="similarity">
    <text evidence="4">Belongs to the CUEDC2 family.</text>
</comment>
<name>CUED2_MOUSE</name>
<keyword id="KW-0963">Cytoplasm</keyword>
<keyword id="KW-0539">Nucleus</keyword>
<keyword id="KW-1185">Reference proteome</keyword>
<keyword id="KW-0833">Ubl conjugation pathway</keyword>
<protein>
    <recommendedName>
        <fullName>CUE domain-containing protein 2</fullName>
    </recommendedName>
</protein>
<accession>Q9CXX9</accession>
<accession>Q99LC1</accession>
<reference key="1">
    <citation type="submission" date="2005-08" db="EMBL/GenBank/DDBJ databases">
        <title>Nucleotide sequence of mouse CUEDC2 mRNA.</title>
        <authorList>
            <person name="Matsumoto K."/>
            <person name="Abiko S."/>
            <person name="Ariga H."/>
        </authorList>
    </citation>
    <scope>NUCLEOTIDE SEQUENCE [MRNA]</scope>
    <source>
        <tissue>Lung tumor</tissue>
    </source>
</reference>
<reference key="2">
    <citation type="journal article" date="2005" name="Science">
        <title>The transcriptional landscape of the mammalian genome.</title>
        <authorList>
            <person name="Carninci P."/>
            <person name="Kasukawa T."/>
            <person name="Katayama S."/>
            <person name="Gough J."/>
            <person name="Frith M.C."/>
            <person name="Maeda N."/>
            <person name="Oyama R."/>
            <person name="Ravasi T."/>
            <person name="Lenhard B."/>
            <person name="Wells C."/>
            <person name="Kodzius R."/>
            <person name="Shimokawa K."/>
            <person name="Bajic V.B."/>
            <person name="Brenner S.E."/>
            <person name="Batalov S."/>
            <person name="Forrest A.R."/>
            <person name="Zavolan M."/>
            <person name="Davis M.J."/>
            <person name="Wilming L.G."/>
            <person name="Aidinis V."/>
            <person name="Allen J.E."/>
            <person name="Ambesi-Impiombato A."/>
            <person name="Apweiler R."/>
            <person name="Aturaliya R.N."/>
            <person name="Bailey T.L."/>
            <person name="Bansal M."/>
            <person name="Baxter L."/>
            <person name="Beisel K.W."/>
            <person name="Bersano T."/>
            <person name="Bono H."/>
            <person name="Chalk A.M."/>
            <person name="Chiu K.P."/>
            <person name="Choudhary V."/>
            <person name="Christoffels A."/>
            <person name="Clutterbuck D.R."/>
            <person name="Crowe M.L."/>
            <person name="Dalla E."/>
            <person name="Dalrymple B.P."/>
            <person name="de Bono B."/>
            <person name="Della Gatta G."/>
            <person name="di Bernardo D."/>
            <person name="Down T."/>
            <person name="Engstrom P."/>
            <person name="Fagiolini M."/>
            <person name="Faulkner G."/>
            <person name="Fletcher C.F."/>
            <person name="Fukushima T."/>
            <person name="Furuno M."/>
            <person name="Futaki S."/>
            <person name="Gariboldi M."/>
            <person name="Georgii-Hemming P."/>
            <person name="Gingeras T.R."/>
            <person name="Gojobori T."/>
            <person name="Green R.E."/>
            <person name="Gustincich S."/>
            <person name="Harbers M."/>
            <person name="Hayashi Y."/>
            <person name="Hensch T.K."/>
            <person name="Hirokawa N."/>
            <person name="Hill D."/>
            <person name="Huminiecki L."/>
            <person name="Iacono M."/>
            <person name="Ikeo K."/>
            <person name="Iwama A."/>
            <person name="Ishikawa T."/>
            <person name="Jakt M."/>
            <person name="Kanapin A."/>
            <person name="Katoh M."/>
            <person name="Kawasawa Y."/>
            <person name="Kelso J."/>
            <person name="Kitamura H."/>
            <person name="Kitano H."/>
            <person name="Kollias G."/>
            <person name="Krishnan S.P."/>
            <person name="Kruger A."/>
            <person name="Kummerfeld S.K."/>
            <person name="Kurochkin I.V."/>
            <person name="Lareau L.F."/>
            <person name="Lazarevic D."/>
            <person name="Lipovich L."/>
            <person name="Liu J."/>
            <person name="Liuni S."/>
            <person name="McWilliam S."/>
            <person name="Madan Babu M."/>
            <person name="Madera M."/>
            <person name="Marchionni L."/>
            <person name="Matsuda H."/>
            <person name="Matsuzawa S."/>
            <person name="Miki H."/>
            <person name="Mignone F."/>
            <person name="Miyake S."/>
            <person name="Morris K."/>
            <person name="Mottagui-Tabar S."/>
            <person name="Mulder N."/>
            <person name="Nakano N."/>
            <person name="Nakauchi H."/>
            <person name="Ng P."/>
            <person name="Nilsson R."/>
            <person name="Nishiguchi S."/>
            <person name="Nishikawa S."/>
            <person name="Nori F."/>
            <person name="Ohara O."/>
            <person name="Okazaki Y."/>
            <person name="Orlando V."/>
            <person name="Pang K.C."/>
            <person name="Pavan W.J."/>
            <person name="Pavesi G."/>
            <person name="Pesole G."/>
            <person name="Petrovsky N."/>
            <person name="Piazza S."/>
            <person name="Reed J."/>
            <person name="Reid J.F."/>
            <person name="Ring B.Z."/>
            <person name="Ringwald M."/>
            <person name="Rost B."/>
            <person name="Ruan Y."/>
            <person name="Salzberg S.L."/>
            <person name="Sandelin A."/>
            <person name="Schneider C."/>
            <person name="Schoenbach C."/>
            <person name="Sekiguchi K."/>
            <person name="Semple C.A."/>
            <person name="Seno S."/>
            <person name="Sessa L."/>
            <person name="Sheng Y."/>
            <person name="Shibata Y."/>
            <person name="Shimada H."/>
            <person name="Shimada K."/>
            <person name="Silva D."/>
            <person name="Sinclair B."/>
            <person name="Sperling S."/>
            <person name="Stupka E."/>
            <person name="Sugiura K."/>
            <person name="Sultana R."/>
            <person name="Takenaka Y."/>
            <person name="Taki K."/>
            <person name="Tammoja K."/>
            <person name="Tan S.L."/>
            <person name="Tang S."/>
            <person name="Taylor M.S."/>
            <person name="Tegner J."/>
            <person name="Teichmann S.A."/>
            <person name="Ueda H.R."/>
            <person name="van Nimwegen E."/>
            <person name="Verardo R."/>
            <person name="Wei C.L."/>
            <person name="Yagi K."/>
            <person name="Yamanishi H."/>
            <person name="Zabarovsky E."/>
            <person name="Zhu S."/>
            <person name="Zimmer A."/>
            <person name="Hide W."/>
            <person name="Bult C."/>
            <person name="Grimmond S.M."/>
            <person name="Teasdale R.D."/>
            <person name="Liu E.T."/>
            <person name="Brusic V."/>
            <person name="Quackenbush J."/>
            <person name="Wahlestedt C."/>
            <person name="Mattick J.S."/>
            <person name="Hume D.A."/>
            <person name="Kai C."/>
            <person name="Sasaki D."/>
            <person name="Tomaru Y."/>
            <person name="Fukuda S."/>
            <person name="Kanamori-Katayama M."/>
            <person name="Suzuki M."/>
            <person name="Aoki J."/>
            <person name="Arakawa T."/>
            <person name="Iida J."/>
            <person name="Imamura K."/>
            <person name="Itoh M."/>
            <person name="Kato T."/>
            <person name="Kawaji H."/>
            <person name="Kawagashira N."/>
            <person name="Kawashima T."/>
            <person name="Kojima M."/>
            <person name="Kondo S."/>
            <person name="Konno H."/>
            <person name="Nakano K."/>
            <person name="Ninomiya N."/>
            <person name="Nishio T."/>
            <person name="Okada M."/>
            <person name="Plessy C."/>
            <person name="Shibata K."/>
            <person name="Shiraki T."/>
            <person name="Suzuki S."/>
            <person name="Tagami M."/>
            <person name="Waki K."/>
            <person name="Watahiki A."/>
            <person name="Okamura-Oho Y."/>
            <person name="Suzuki H."/>
            <person name="Kawai J."/>
            <person name="Hayashizaki Y."/>
        </authorList>
    </citation>
    <scope>NUCLEOTIDE SEQUENCE [LARGE SCALE MRNA]</scope>
    <source>
        <strain>C57BL/6J</strain>
        <tissue>Head</tissue>
    </source>
</reference>
<reference key="3">
    <citation type="journal article" date="2004" name="Genome Res.">
        <title>The status, quality, and expansion of the NIH full-length cDNA project: the Mammalian Gene Collection (MGC).</title>
        <authorList>
            <consortium name="The MGC Project Team"/>
        </authorList>
    </citation>
    <scope>NUCLEOTIDE SEQUENCE [LARGE SCALE MRNA]</scope>
    <source>
        <strain>Czech II</strain>
        <tissue>Mammary tumor</tissue>
    </source>
</reference>
<reference key="4">
    <citation type="journal article" date="2010" name="Cell">
        <title>A tissue-specific atlas of mouse protein phosphorylation and expression.</title>
        <authorList>
            <person name="Huttlin E.L."/>
            <person name="Jedrychowski M.P."/>
            <person name="Elias J.E."/>
            <person name="Goswami T."/>
            <person name="Rad R."/>
            <person name="Beausoleil S.A."/>
            <person name="Villen J."/>
            <person name="Haas W."/>
            <person name="Sowa M.E."/>
            <person name="Gygi S.P."/>
        </authorList>
    </citation>
    <scope>IDENTIFICATION BY MASS SPECTROMETRY [LARGE SCALE ANALYSIS]</scope>
    <source>
        <tissue>Brain</tissue>
    </source>
</reference>
<evidence type="ECO:0000250" key="1"/>
<evidence type="ECO:0000255" key="2">
    <source>
        <dbReference type="PROSITE-ProRule" id="PRU00468"/>
    </source>
</evidence>
<evidence type="ECO:0000256" key="3">
    <source>
        <dbReference type="SAM" id="MobiDB-lite"/>
    </source>
</evidence>
<evidence type="ECO:0000305" key="4"/>
<proteinExistence type="evidence at protein level"/>
<gene>
    <name type="primary">Cuedc2</name>
</gene>